<feature type="chain" id="PRO_1000205689" description="Integration host factor subunit alpha">
    <location>
        <begin position="1"/>
        <end position="99"/>
    </location>
</feature>
<feature type="region of interest" description="Disordered" evidence="2">
    <location>
        <begin position="49"/>
        <end position="73"/>
    </location>
</feature>
<keyword id="KW-0233">DNA recombination</keyword>
<keyword id="KW-0238">DNA-binding</keyword>
<keyword id="KW-0804">Transcription</keyword>
<keyword id="KW-0805">Transcription regulation</keyword>
<keyword id="KW-0810">Translation regulation</keyword>
<gene>
    <name evidence="1" type="primary">ihfA</name>
    <name evidence="1" type="synonym">himA</name>
    <name type="ordered locus">BWG_1526</name>
</gene>
<protein>
    <recommendedName>
        <fullName evidence="1">Integration host factor subunit alpha</fullName>
        <shortName evidence="1">IHF-alpha</shortName>
    </recommendedName>
</protein>
<evidence type="ECO:0000255" key="1">
    <source>
        <dbReference type="HAMAP-Rule" id="MF_00380"/>
    </source>
</evidence>
<evidence type="ECO:0000256" key="2">
    <source>
        <dbReference type="SAM" id="MobiDB-lite"/>
    </source>
</evidence>
<organism>
    <name type="scientific">Escherichia coli (strain K12 / MC4100 / BW2952)</name>
    <dbReference type="NCBI Taxonomy" id="595496"/>
    <lineage>
        <taxon>Bacteria</taxon>
        <taxon>Pseudomonadati</taxon>
        <taxon>Pseudomonadota</taxon>
        <taxon>Gammaproteobacteria</taxon>
        <taxon>Enterobacterales</taxon>
        <taxon>Enterobacteriaceae</taxon>
        <taxon>Escherichia</taxon>
    </lineage>
</organism>
<reference key="1">
    <citation type="journal article" date="2009" name="J. Bacteriol.">
        <title>Genomic sequencing reveals regulatory mutations and recombinational events in the widely used MC4100 lineage of Escherichia coli K-12.</title>
        <authorList>
            <person name="Ferenci T."/>
            <person name="Zhou Z."/>
            <person name="Betteridge T."/>
            <person name="Ren Y."/>
            <person name="Liu Y."/>
            <person name="Feng L."/>
            <person name="Reeves P.R."/>
            <person name="Wang L."/>
        </authorList>
    </citation>
    <scope>NUCLEOTIDE SEQUENCE [LARGE SCALE GENOMIC DNA]</scope>
    <source>
        <strain>K12 / MC4100 / BW2952</strain>
    </source>
</reference>
<accession>C4ZYH4</accession>
<comment type="function">
    <text evidence="1">This protein is one of the two subunits of integration host factor, a specific DNA-binding protein that functions in genetic recombination as well as in transcriptional and translational control.</text>
</comment>
<comment type="subunit">
    <text evidence="1">Heterodimer of an alpha and a beta chain.</text>
</comment>
<comment type="similarity">
    <text evidence="1">Belongs to the bacterial histone-like protein family.</text>
</comment>
<sequence length="99" mass="11354">MALTKAEMSEYLFDKLGLSKRDAKELVELFFEEIRRALENGEQVKLSGFGNFDLRDKNQRPGRNPKTGEDIPITARRVVTFRPGQKLKSRVENASPKDE</sequence>
<name>IHFA_ECOBW</name>
<proteinExistence type="inferred from homology"/>
<dbReference type="EMBL" id="CP001396">
    <property type="protein sequence ID" value="ACR63519.1"/>
    <property type="molecule type" value="Genomic_DNA"/>
</dbReference>
<dbReference type="RefSeq" id="WP_001229265.1">
    <property type="nucleotide sequence ID" value="NC_012759.1"/>
</dbReference>
<dbReference type="SMR" id="C4ZYH4"/>
<dbReference type="GeneID" id="93775925"/>
<dbReference type="KEGG" id="ebw:BWG_1526"/>
<dbReference type="HOGENOM" id="CLU_105066_1_3_6"/>
<dbReference type="GO" id="GO:0005829">
    <property type="term" value="C:cytosol"/>
    <property type="evidence" value="ECO:0007669"/>
    <property type="project" value="TreeGrafter"/>
</dbReference>
<dbReference type="GO" id="GO:0003677">
    <property type="term" value="F:DNA binding"/>
    <property type="evidence" value="ECO:0007669"/>
    <property type="project" value="UniProtKB-UniRule"/>
</dbReference>
<dbReference type="GO" id="GO:0030527">
    <property type="term" value="F:structural constituent of chromatin"/>
    <property type="evidence" value="ECO:0007669"/>
    <property type="project" value="InterPro"/>
</dbReference>
<dbReference type="GO" id="GO:0006310">
    <property type="term" value="P:DNA recombination"/>
    <property type="evidence" value="ECO:0007669"/>
    <property type="project" value="UniProtKB-UniRule"/>
</dbReference>
<dbReference type="GO" id="GO:0009893">
    <property type="term" value="P:positive regulation of metabolic process"/>
    <property type="evidence" value="ECO:0007669"/>
    <property type="project" value="UniProtKB-ARBA"/>
</dbReference>
<dbReference type="GO" id="GO:0006355">
    <property type="term" value="P:regulation of DNA-templated transcription"/>
    <property type="evidence" value="ECO:0007669"/>
    <property type="project" value="UniProtKB-UniRule"/>
</dbReference>
<dbReference type="GO" id="GO:0006417">
    <property type="term" value="P:regulation of translation"/>
    <property type="evidence" value="ECO:0007669"/>
    <property type="project" value="UniProtKB-UniRule"/>
</dbReference>
<dbReference type="CDD" id="cd13835">
    <property type="entry name" value="IHF_A"/>
    <property type="match status" value="1"/>
</dbReference>
<dbReference type="FunFam" id="4.10.520.10:FF:000002">
    <property type="entry name" value="Integration host factor subunit alpha"/>
    <property type="match status" value="1"/>
</dbReference>
<dbReference type="Gene3D" id="4.10.520.10">
    <property type="entry name" value="IHF-like DNA-binding proteins"/>
    <property type="match status" value="1"/>
</dbReference>
<dbReference type="HAMAP" id="MF_00380">
    <property type="entry name" value="IHF_alpha"/>
    <property type="match status" value="1"/>
</dbReference>
<dbReference type="InterPro" id="IPR000119">
    <property type="entry name" value="Hist_DNA-bd"/>
</dbReference>
<dbReference type="InterPro" id="IPR020816">
    <property type="entry name" value="Histone-like_DNA-bd_CS"/>
</dbReference>
<dbReference type="InterPro" id="IPR010992">
    <property type="entry name" value="IHF-like_DNA-bd_dom_sf"/>
</dbReference>
<dbReference type="InterPro" id="IPR005684">
    <property type="entry name" value="IHF_alpha"/>
</dbReference>
<dbReference type="NCBIfam" id="TIGR00987">
    <property type="entry name" value="himA"/>
    <property type="match status" value="1"/>
</dbReference>
<dbReference type="NCBIfam" id="NF001401">
    <property type="entry name" value="PRK00285.1"/>
    <property type="match status" value="1"/>
</dbReference>
<dbReference type="PANTHER" id="PTHR33175">
    <property type="entry name" value="DNA-BINDING PROTEIN HU"/>
    <property type="match status" value="1"/>
</dbReference>
<dbReference type="PANTHER" id="PTHR33175:SF2">
    <property type="entry name" value="INTEGRATION HOST FACTOR SUBUNIT ALPHA"/>
    <property type="match status" value="1"/>
</dbReference>
<dbReference type="Pfam" id="PF00216">
    <property type="entry name" value="Bac_DNA_binding"/>
    <property type="match status" value="1"/>
</dbReference>
<dbReference type="PRINTS" id="PR01727">
    <property type="entry name" value="DNABINDINGHU"/>
</dbReference>
<dbReference type="SMART" id="SM00411">
    <property type="entry name" value="BHL"/>
    <property type="match status" value="1"/>
</dbReference>
<dbReference type="SUPFAM" id="SSF47729">
    <property type="entry name" value="IHF-like DNA-binding proteins"/>
    <property type="match status" value="1"/>
</dbReference>
<dbReference type="PROSITE" id="PS00045">
    <property type="entry name" value="HISTONE_LIKE"/>
    <property type="match status" value="1"/>
</dbReference>